<name>RL15_CAUVC</name>
<comment type="function">
    <text evidence="1">Binds to the 23S rRNA.</text>
</comment>
<comment type="subunit">
    <text evidence="1">Part of the 50S ribosomal subunit.</text>
</comment>
<comment type="similarity">
    <text evidence="1">Belongs to the universal ribosomal protein uL15 family.</text>
</comment>
<proteinExistence type="inferred from homology"/>
<evidence type="ECO:0000255" key="1">
    <source>
        <dbReference type="HAMAP-Rule" id="MF_01341"/>
    </source>
</evidence>
<evidence type="ECO:0000256" key="2">
    <source>
        <dbReference type="SAM" id="MobiDB-lite"/>
    </source>
</evidence>
<evidence type="ECO:0000305" key="3"/>
<accession>Q9A8T4</accession>
<sequence>MTKLNELAPREGSTKGRMRVGRGPGSGKGKTAGRGVKGQKARSGVAINGFEGGQMPLHMRMPKRGFNNPFRLEFAEVNLWRLEQAVEAGKIKKGAELDAAALIAAGVIRRELDGVKLLAKGEIKTALKLTVYSATEAAIKAVEAAGGSVTVTKKAKAQAEA</sequence>
<gene>
    <name evidence="1" type="primary">rplO</name>
    <name type="ordered locus">CC_1267</name>
</gene>
<feature type="chain" id="PRO_0000104699" description="Large ribosomal subunit protein uL15">
    <location>
        <begin position="1"/>
        <end position="161"/>
    </location>
</feature>
<feature type="region of interest" description="Disordered" evidence="2">
    <location>
        <begin position="1"/>
        <end position="39"/>
    </location>
</feature>
<feature type="compositionally biased region" description="Gly residues" evidence="2">
    <location>
        <begin position="22"/>
        <end position="36"/>
    </location>
</feature>
<protein>
    <recommendedName>
        <fullName evidence="1">Large ribosomal subunit protein uL15</fullName>
    </recommendedName>
    <alternativeName>
        <fullName evidence="3">50S ribosomal protein L15</fullName>
    </alternativeName>
</protein>
<dbReference type="EMBL" id="AE005673">
    <property type="protein sequence ID" value="AAK23248.1"/>
    <property type="molecule type" value="Genomic_DNA"/>
</dbReference>
<dbReference type="PIR" id="D87406">
    <property type="entry name" value="D87406"/>
</dbReference>
<dbReference type="RefSeq" id="NP_420080.1">
    <property type="nucleotide sequence ID" value="NC_002696.2"/>
</dbReference>
<dbReference type="RefSeq" id="WP_010919146.1">
    <property type="nucleotide sequence ID" value="NC_002696.2"/>
</dbReference>
<dbReference type="SMR" id="Q9A8T4"/>
<dbReference type="STRING" id="190650.CC_1267"/>
<dbReference type="EnsemblBacteria" id="AAK23248">
    <property type="protein sequence ID" value="AAK23248"/>
    <property type="gene ID" value="CC_1267"/>
</dbReference>
<dbReference type="KEGG" id="ccr:CC_1267"/>
<dbReference type="PATRIC" id="fig|190650.5.peg.1292"/>
<dbReference type="eggNOG" id="COG0200">
    <property type="taxonomic scope" value="Bacteria"/>
</dbReference>
<dbReference type="HOGENOM" id="CLU_055188_4_0_5"/>
<dbReference type="BioCyc" id="CAULO:CC1267-MONOMER"/>
<dbReference type="Proteomes" id="UP000001816">
    <property type="component" value="Chromosome"/>
</dbReference>
<dbReference type="GO" id="GO:0022625">
    <property type="term" value="C:cytosolic large ribosomal subunit"/>
    <property type="evidence" value="ECO:0007669"/>
    <property type="project" value="TreeGrafter"/>
</dbReference>
<dbReference type="GO" id="GO:0019843">
    <property type="term" value="F:rRNA binding"/>
    <property type="evidence" value="ECO:0007669"/>
    <property type="project" value="UniProtKB-UniRule"/>
</dbReference>
<dbReference type="GO" id="GO:0003735">
    <property type="term" value="F:structural constituent of ribosome"/>
    <property type="evidence" value="ECO:0007669"/>
    <property type="project" value="InterPro"/>
</dbReference>
<dbReference type="GO" id="GO:0006412">
    <property type="term" value="P:translation"/>
    <property type="evidence" value="ECO:0007669"/>
    <property type="project" value="UniProtKB-UniRule"/>
</dbReference>
<dbReference type="Gene3D" id="3.100.10.10">
    <property type="match status" value="1"/>
</dbReference>
<dbReference type="HAMAP" id="MF_01341">
    <property type="entry name" value="Ribosomal_uL15"/>
    <property type="match status" value="1"/>
</dbReference>
<dbReference type="InterPro" id="IPR030878">
    <property type="entry name" value="Ribosomal_uL15"/>
</dbReference>
<dbReference type="InterPro" id="IPR021131">
    <property type="entry name" value="Ribosomal_uL15/eL18"/>
</dbReference>
<dbReference type="InterPro" id="IPR036227">
    <property type="entry name" value="Ribosomal_uL15/eL18_sf"/>
</dbReference>
<dbReference type="InterPro" id="IPR005749">
    <property type="entry name" value="Ribosomal_uL15_bac-type"/>
</dbReference>
<dbReference type="InterPro" id="IPR001196">
    <property type="entry name" value="Ribosomal_uL15_CS"/>
</dbReference>
<dbReference type="NCBIfam" id="TIGR01071">
    <property type="entry name" value="rplO_bact"/>
    <property type="match status" value="1"/>
</dbReference>
<dbReference type="PANTHER" id="PTHR12934">
    <property type="entry name" value="50S RIBOSOMAL PROTEIN L15"/>
    <property type="match status" value="1"/>
</dbReference>
<dbReference type="PANTHER" id="PTHR12934:SF11">
    <property type="entry name" value="LARGE RIBOSOMAL SUBUNIT PROTEIN UL15M"/>
    <property type="match status" value="1"/>
</dbReference>
<dbReference type="Pfam" id="PF00828">
    <property type="entry name" value="Ribosomal_L27A"/>
    <property type="match status" value="1"/>
</dbReference>
<dbReference type="SUPFAM" id="SSF52080">
    <property type="entry name" value="Ribosomal proteins L15p and L18e"/>
    <property type="match status" value="1"/>
</dbReference>
<dbReference type="PROSITE" id="PS00475">
    <property type="entry name" value="RIBOSOMAL_L15"/>
    <property type="match status" value="1"/>
</dbReference>
<reference key="1">
    <citation type="journal article" date="2001" name="Proc. Natl. Acad. Sci. U.S.A.">
        <title>Complete genome sequence of Caulobacter crescentus.</title>
        <authorList>
            <person name="Nierman W.C."/>
            <person name="Feldblyum T.V."/>
            <person name="Laub M.T."/>
            <person name="Paulsen I.T."/>
            <person name="Nelson K.E."/>
            <person name="Eisen J.A."/>
            <person name="Heidelberg J.F."/>
            <person name="Alley M.R.K."/>
            <person name="Ohta N."/>
            <person name="Maddock J.R."/>
            <person name="Potocka I."/>
            <person name="Nelson W.C."/>
            <person name="Newton A."/>
            <person name="Stephens C."/>
            <person name="Phadke N.D."/>
            <person name="Ely B."/>
            <person name="DeBoy R.T."/>
            <person name="Dodson R.J."/>
            <person name="Durkin A.S."/>
            <person name="Gwinn M.L."/>
            <person name="Haft D.H."/>
            <person name="Kolonay J.F."/>
            <person name="Smit J."/>
            <person name="Craven M.B."/>
            <person name="Khouri H.M."/>
            <person name="Shetty J."/>
            <person name="Berry K.J."/>
            <person name="Utterback T.R."/>
            <person name="Tran K."/>
            <person name="Wolf A.M."/>
            <person name="Vamathevan J.J."/>
            <person name="Ermolaeva M.D."/>
            <person name="White O."/>
            <person name="Salzberg S.L."/>
            <person name="Venter J.C."/>
            <person name="Shapiro L."/>
            <person name="Fraser C.M."/>
        </authorList>
    </citation>
    <scope>NUCLEOTIDE SEQUENCE [LARGE SCALE GENOMIC DNA]</scope>
    <source>
        <strain>ATCC 19089 / CIP 103742 / CB 15</strain>
    </source>
</reference>
<keyword id="KW-1185">Reference proteome</keyword>
<keyword id="KW-0687">Ribonucleoprotein</keyword>
<keyword id="KW-0689">Ribosomal protein</keyword>
<keyword id="KW-0694">RNA-binding</keyword>
<keyword id="KW-0699">rRNA-binding</keyword>
<organism>
    <name type="scientific">Caulobacter vibrioides (strain ATCC 19089 / CIP 103742 / CB 15)</name>
    <name type="common">Caulobacter crescentus</name>
    <dbReference type="NCBI Taxonomy" id="190650"/>
    <lineage>
        <taxon>Bacteria</taxon>
        <taxon>Pseudomonadati</taxon>
        <taxon>Pseudomonadota</taxon>
        <taxon>Alphaproteobacteria</taxon>
        <taxon>Caulobacterales</taxon>
        <taxon>Caulobacteraceae</taxon>
        <taxon>Caulobacter</taxon>
    </lineage>
</organism>